<name>RL24_DINSH</name>
<comment type="function">
    <text evidence="1">One of two assembly initiator proteins, it binds directly to the 5'-end of the 23S rRNA, where it nucleates assembly of the 50S subunit.</text>
</comment>
<comment type="function">
    <text evidence="1">One of the proteins that surrounds the polypeptide exit tunnel on the outside of the subunit.</text>
</comment>
<comment type="subunit">
    <text evidence="1">Part of the 50S ribosomal subunit.</text>
</comment>
<comment type="similarity">
    <text evidence="1">Belongs to the universal ribosomal protein uL24 family.</text>
</comment>
<reference key="1">
    <citation type="journal article" date="2010" name="ISME J.">
        <title>The complete genome sequence of the algal symbiont Dinoroseobacter shibae: a hitchhiker's guide to life in the sea.</title>
        <authorList>
            <person name="Wagner-Dobler I."/>
            <person name="Ballhausen B."/>
            <person name="Berger M."/>
            <person name="Brinkhoff T."/>
            <person name="Buchholz I."/>
            <person name="Bunk B."/>
            <person name="Cypionka H."/>
            <person name="Daniel R."/>
            <person name="Drepper T."/>
            <person name="Gerdts G."/>
            <person name="Hahnke S."/>
            <person name="Han C."/>
            <person name="Jahn D."/>
            <person name="Kalhoefer D."/>
            <person name="Kiss H."/>
            <person name="Klenk H.P."/>
            <person name="Kyrpides N."/>
            <person name="Liebl W."/>
            <person name="Liesegang H."/>
            <person name="Meincke L."/>
            <person name="Pati A."/>
            <person name="Petersen J."/>
            <person name="Piekarski T."/>
            <person name="Pommerenke C."/>
            <person name="Pradella S."/>
            <person name="Pukall R."/>
            <person name="Rabus R."/>
            <person name="Stackebrandt E."/>
            <person name="Thole S."/>
            <person name="Thompson L."/>
            <person name="Tielen P."/>
            <person name="Tomasch J."/>
            <person name="von Jan M."/>
            <person name="Wanphrut N."/>
            <person name="Wichels A."/>
            <person name="Zech H."/>
            <person name="Simon M."/>
        </authorList>
    </citation>
    <scope>NUCLEOTIDE SEQUENCE [LARGE SCALE GENOMIC DNA]</scope>
    <source>
        <strain>DSM 16493 / NCIMB 14021 / DFL 12</strain>
    </source>
</reference>
<organism>
    <name type="scientific">Dinoroseobacter shibae (strain DSM 16493 / NCIMB 14021 / DFL 12)</name>
    <dbReference type="NCBI Taxonomy" id="398580"/>
    <lineage>
        <taxon>Bacteria</taxon>
        <taxon>Pseudomonadati</taxon>
        <taxon>Pseudomonadota</taxon>
        <taxon>Alphaproteobacteria</taxon>
        <taxon>Rhodobacterales</taxon>
        <taxon>Roseobacteraceae</taxon>
        <taxon>Dinoroseobacter</taxon>
    </lineage>
</organism>
<evidence type="ECO:0000255" key="1">
    <source>
        <dbReference type="HAMAP-Rule" id="MF_01326"/>
    </source>
</evidence>
<evidence type="ECO:0000305" key="2"/>
<dbReference type="EMBL" id="CP000830">
    <property type="protein sequence ID" value="ABV92045.1"/>
    <property type="molecule type" value="Genomic_DNA"/>
</dbReference>
<dbReference type="RefSeq" id="WP_012176975.1">
    <property type="nucleotide sequence ID" value="NC_009952.1"/>
</dbReference>
<dbReference type="SMR" id="A8LM68"/>
<dbReference type="STRING" id="398580.Dshi_0296"/>
<dbReference type="KEGG" id="dsh:Dshi_0296"/>
<dbReference type="eggNOG" id="COG0198">
    <property type="taxonomic scope" value="Bacteria"/>
</dbReference>
<dbReference type="HOGENOM" id="CLU_093315_2_2_5"/>
<dbReference type="OrthoDB" id="9807419at2"/>
<dbReference type="Proteomes" id="UP000006833">
    <property type="component" value="Chromosome"/>
</dbReference>
<dbReference type="GO" id="GO:1990904">
    <property type="term" value="C:ribonucleoprotein complex"/>
    <property type="evidence" value="ECO:0007669"/>
    <property type="project" value="UniProtKB-KW"/>
</dbReference>
<dbReference type="GO" id="GO:0005840">
    <property type="term" value="C:ribosome"/>
    <property type="evidence" value="ECO:0007669"/>
    <property type="project" value="UniProtKB-KW"/>
</dbReference>
<dbReference type="GO" id="GO:0019843">
    <property type="term" value="F:rRNA binding"/>
    <property type="evidence" value="ECO:0007669"/>
    <property type="project" value="UniProtKB-UniRule"/>
</dbReference>
<dbReference type="GO" id="GO:0003735">
    <property type="term" value="F:structural constituent of ribosome"/>
    <property type="evidence" value="ECO:0007669"/>
    <property type="project" value="InterPro"/>
</dbReference>
<dbReference type="GO" id="GO:0006412">
    <property type="term" value="P:translation"/>
    <property type="evidence" value="ECO:0007669"/>
    <property type="project" value="UniProtKB-UniRule"/>
</dbReference>
<dbReference type="CDD" id="cd06089">
    <property type="entry name" value="KOW_RPL26"/>
    <property type="match status" value="1"/>
</dbReference>
<dbReference type="Gene3D" id="2.30.30.30">
    <property type="match status" value="1"/>
</dbReference>
<dbReference type="HAMAP" id="MF_01326_B">
    <property type="entry name" value="Ribosomal_uL24_B"/>
    <property type="match status" value="1"/>
</dbReference>
<dbReference type="InterPro" id="IPR005824">
    <property type="entry name" value="KOW"/>
</dbReference>
<dbReference type="InterPro" id="IPR014722">
    <property type="entry name" value="Rib_uL2_dom2"/>
</dbReference>
<dbReference type="InterPro" id="IPR003256">
    <property type="entry name" value="Ribosomal_uL24"/>
</dbReference>
<dbReference type="InterPro" id="IPR005825">
    <property type="entry name" value="Ribosomal_uL24_CS"/>
</dbReference>
<dbReference type="InterPro" id="IPR041988">
    <property type="entry name" value="Ribosomal_uL24_KOW"/>
</dbReference>
<dbReference type="InterPro" id="IPR008991">
    <property type="entry name" value="Translation_prot_SH3-like_sf"/>
</dbReference>
<dbReference type="NCBIfam" id="TIGR01079">
    <property type="entry name" value="rplX_bact"/>
    <property type="match status" value="1"/>
</dbReference>
<dbReference type="PANTHER" id="PTHR12903">
    <property type="entry name" value="MITOCHONDRIAL RIBOSOMAL PROTEIN L24"/>
    <property type="match status" value="1"/>
</dbReference>
<dbReference type="Pfam" id="PF00467">
    <property type="entry name" value="KOW"/>
    <property type="match status" value="1"/>
</dbReference>
<dbReference type="Pfam" id="PF17136">
    <property type="entry name" value="ribosomal_L24"/>
    <property type="match status" value="1"/>
</dbReference>
<dbReference type="SMART" id="SM00739">
    <property type="entry name" value="KOW"/>
    <property type="match status" value="1"/>
</dbReference>
<dbReference type="SUPFAM" id="SSF50104">
    <property type="entry name" value="Translation proteins SH3-like domain"/>
    <property type="match status" value="1"/>
</dbReference>
<dbReference type="PROSITE" id="PS01108">
    <property type="entry name" value="RIBOSOMAL_L24"/>
    <property type="match status" value="1"/>
</dbReference>
<feature type="chain" id="PRO_1000086478" description="Large ribosomal subunit protein uL24">
    <location>
        <begin position="1"/>
        <end position="101"/>
    </location>
</feature>
<protein>
    <recommendedName>
        <fullName evidence="1">Large ribosomal subunit protein uL24</fullName>
    </recommendedName>
    <alternativeName>
        <fullName evidence="2">50S ribosomal protein L24</fullName>
    </alternativeName>
</protein>
<proteinExistence type="inferred from homology"/>
<accession>A8LM68</accession>
<gene>
    <name evidence="1" type="primary">rplX</name>
    <name type="ordered locus">Dshi_0296</name>
</gene>
<keyword id="KW-1185">Reference proteome</keyword>
<keyword id="KW-0687">Ribonucleoprotein</keyword>
<keyword id="KW-0689">Ribosomal protein</keyword>
<keyword id="KW-0694">RNA-binding</keyword>
<keyword id="KW-0699">rRNA-binding</keyword>
<sequence length="101" mass="10728">MAAKLKKGDKVVVLAGKDKGKEGEITSVSPKTGKAVVDGLNIAIRHTRQSQNSQGGRIPQAMPIDLSNLALVDSNGKPTRVGFRMEDGKKVRFAKTTGEVV</sequence>